<gene>
    <name type="primary">MT-ND1</name>
    <name type="synonym">MTND1</name>
    <name type="synonym">NADH1</name>
    <name type="synonym">ND1</name>
</gene>
<feature type="chain" id="PRO_0000232861" description="NADH-ubiquinone oxidoreductase chain 1">
    <location>
        <begin position="1"/>
        <end position="318"/>
    </location>
</feature>
<feature type="transmembrane region" description="Helical" evidence="2">
    <location>
        <begin position="2"/>
        <end position="22"/>
    </location>
</feature>
<feature type="transmembrane region" description="Helical" evidence="2">
    <location>
        <begin position="69"/>
        <end position="89"/>
    </location>
</feature>
<feature type="transmembrane region" description="Helical" evidence="2">
    <location>
        <begin position="102"/>
        <end position="122"/>
    </location>
</feature>
<feature type="transmembrane region" description="Helical" evidence="2">
    <location>
        <begin position="146"/>
        <end position="166"/>
    </location>
</feature>
<feature type="transmembrane region" description="Helical" evidence="2">
    <location>
        <begin position="171"/>
        <end position="191"/>
    </location>
</feature>
<feature type="transmembrane region" description="Helical" evidence="2">
    <location>
        <begin position="222"/>
        <end position="242"/>
    </location>
</feature>
<feature type="transmembrane region" description="Helical" evidence="2">
    <location>
        <begin position="253"/>
        <end position="273"/>
    </location>
</feature>
<feature type="transmembrane region" description="Helical" evidence="2">
    <location>
        <begin position="294"/>
        <end position="314"/>
    </location>
</feature>
<accession>Q9TA29</accession>
<organism>
    <name type="scientific">Loxodonta africana</name>
    <name type="common">African elephant</name>
    <dbReference type="NCBI Taxonomy" id="9785"/>
    <lineage>
        <taxon>Eukaryota</taxon>
        <taxon>Metazoa</taxon>
        <taxon>Chordata</taxon>
        <taxon>Craniata</taxon>
        <taxon>Vertebrata</taxon>
        <taxon>Euteleostomi</taxon>
        <taxon>Mammalia</taxon>
        <taxon>Eutheria</taxon>
        <taxon>Afrotheria</taxon>
        <taxon>Proboscidea</taxon>
        <taxon>Elephantidae</taxon>
        <taxon>Loxodonta</taxon>
    </lineage>
</organism>
<sequence>MFLINVLTVTLPILLAVAFLTLVERKALGYMQLRKGPNVVGPYGLLQPIADAIKLFTKEPIYPQTSSKFLFTVAPILALTLALTVWAPLPMPYPLINLNLSLLFILAMSSLMVYSILWSGWASNSKYALMGALRAVAQTISYEVSMTTITLSMVLMNGSFTLTAFAMTQEHLWLILPMWPLMMMWFTSTLAETNRAPFDLTEGESELVSGFNVEYSAGPFALFFMAEYANIIMMNALTVILFMGTSYDPQMPEISTINFVMKTIILTICFLWVRASYPRFRYDQLMHLLWKNFLPLTLALCMWHISVLISLACIPPQA</sequence>
<reference key="1">
    <citation type="journal article" date="2000" name="Zoology">
        <title>The complete mitochondrial genome sequence of the African elephant (Loxodonta africana), phylogenetic relationships of Proboscidea to other mammals and D-loop heteroplasmy.</title>
        <authorList>
            <person name="Hauf J."/>
            <person name="Waddell P.J."/>
            <person name="Chalwatzis N."/>
            <person name="Joger U."/>
            <person name="Zimmermann F.K."/>
        </authorList>
    </citation>
    <scope>NUCLEOTIDE SEQUENCE [GENOMIC DNA]</scope>
    <source>
        <tissue>Blood</tissue>
    </source>
</reference>
<reference key="2">
    <citation type="journal article" date="2006" name="PLoS Biol.">
        <title>Complete mitochondrial genome and phylogeny of Pleistocene mammoth Mammuthus primigenius.</title>
        <authorList>
            <person name="Rogaev E.I."/>
            <person name="Moliaka Y.K."/>
            <person name="Malyarchuk B.A."/>
            <person name="Kondrashov F.A."/>
            <person name="Derenko M.V."/>
            <person name="Chumakov I."/>
            <person name="Grigorenko A.P."/>
        </authorList>
    </citation>
    <scope>NUCLEOTIDE SEQUENCE [GENOMIC DNA]</scope>
    <source>
        <tissue>Blood</tissue>
    </source>
</reference>
<geneLocation type="mitochondrion"/>
<comment type="function">
    <text evidence="1">Core subunit of the mitochondrial membrane respiratory chain NADH dehydrogenase (Complex I) that is believed to belong to the minimal assembly required for catalysis. Complex I functions in the transfer of electrons from NADH to the respiratory chain. The immediate electron acceptor for the enzyme is believed to be ubiquinone (By similarity).</text>
</comment>
<comment type="catalytic activity">
    <reaction>
        <text>a ubiquinone + NADH + 5 H(+)(in) = a ubiquinol + NAD(+) + 4 H(+)(out)</text>
        <dbReference type="Rhea" id="RHEA:29091"/>
        <dbReference type="Rhea" id="RHEA-COMP:9565"/>
        <dbReference type="Rhea" id="RHEA-COMP:9566"/>
        <dbReference type="ChEBI" id="CHEBI:15378"/>
        <dbReference type="ChEBI" id="CHEBI:16389"/>
        <dbReference type="ChEBI" id="CHEBI:17976"/>
        <dbReference type="ChEBI" id="CHEBI:57540"/>
        <dbReference type="ChEBI" id="CHEBI:57945"/>
        <dbReference type="EC" id="7.1.1.2"/>
    </reaction>
</comment>
<comment type="subcellular location">
    <subcellularLocation>
        <location evidence="1">Mitochondrion inner membrane</location>
        <topology evidence="1">Multi-pass membrane protein</topology>
    </subcellularLocation>
</comment>
<comment type="similarity">
    <text evidence="3">Belongs to the complex I subunit 1 family.</text>
</comment>
<dbReference type="EC" id="7.1.1.2"/>
<dbReference type="EMBL" id="AJ224821">
    <property type="protein sequence ID" value="CAA12138.1"/>
    <property type="molecule type" value="Genomic_DNA"/>
</dbReference>
<dbReference type="EMBL" id="DQ316069">
    <property type="protein sequence ID" value="ABC17904.1"/>
    <property type="molecule type" value="Genomic_DNA"/>
</dbReference>
<dbReference type="PIR" id="T45550">
    <property type="entry name" value="T45550"/>
</dbReference>
<dbReference type="RefSeq" id="NP_009279.1">
    <property type="nucleotide sequence ID" value="NC_000934.1"/>
</dbReference>
<dbReference type="SMR" id="Q9TA29"/>
<dbReference type="FunCoup" id="Q9TA29">
    <property type="interactions" value="96"/>
</dbReference>
<dbReference type="STRING" id="9785.ENSLAFP00000029491"/>
<dbReference type="Ensembl" id="ENSLAFT00000038040.1">
    <property type="protein sequence ID" value="ENSLAFP00000029491.1"/>
    <property type="gene ID" value="ENSLAFG00000033274.1"/>
</dbReference>
<dbReference type="GeneID" id="808794"/>
<dbReference type="KEGG" id="lav:808794"/>
<dbReference type="CTD" id="4535"/>
<dbReference type="eggNOG" id="KOG4770">
    <property type="taxonomic scope" value="Eukaryota"/>
</dbReference>
<dbReference type="GeneTree" id="ENSGT00390000006621"/>
<dbReference type="HOGENOM" id="CLU_015134_0_1_1"/>
<dbReference type="InParanoid" id="Q9TA29"/>
<dbReference type="OMA" id="WSGWASN"/>
<dbReference type="OrthoDB" id="531329at2759"/>
<dbReference type="TreeFam" id="TF352957"/>
<dbReference type="Proteomes" id="UP000007646">
    <property type="component" value="Unassembled WGS sequence"/>
</dbReference>
<dbReference type="GO" id="GO:0005743">
    <property type="term" value="C:mitochondrial inner membrane"/>
    <property type="evidence" value="ECO:0007669"/>
    <property type="project" value="UniProtKB-SubCell"/>
</dbReference>
<dbReference type="GO" id="GO:0045271">
    <property type="term" value="C:respiratory chain complex I"/>
    <property type="evidence" value="ECO:0007669"/>
    <property type="project" value="Ensembl"/>
</dbReference>
<dbReference type="GO" id="GO:0008137">
    <property type="term" value="F:NADH dehydrogenase (ubiquinone) activity"/>
    <property type="evidence" value="ECO:0007669"/>
    <property type="project" value="UniProtKB-EC"/>
</dbReference>
<dbReference type="GO" id="GO:0006120">
    <property type="term" value="P:mitochondrial electron transport, NADH to ubiquinone"/>
    <property type="evidence" value="ECO:0007669"/>
    <property type="project" value="Ensembl"/>
</dbReference>
<dbReference type="GO" id="GO:0032981">
    <property type="term" value="P:mitochondrial respiratory chain complex I assembly"/>
    <property type="evidence" value="ECO:0007669"/>
    <property type="project" value="Ensembl"/>
</dbReference>
<dbReference type="HAMAP" id="MF_01350">
    <property type="entry name" value="NDH1_NuoH"/>
    <property type="match status" value="1"/>
</dbReference>
<dbReference type="InterPro" id="IPR001694">
    <property type="entry name" value="NADH_UbQ_OxRdtase_su1/FPO"/>
</dbReference>
<dbReference type="InterPro" id="IPR018086">
    <property type="entry name" value="NADH_UbQ_OxRdtase_su1_CS"/>
</dbReference>
<dbReference type="PANTHER" id="PTHR11432">
    <property type="entry name" value="NADH DEHYDROGENASE SUBUNIT 1"/>
    <property type="match status" value="1"/>
</dbReference>
<dbReference type="PANTHER" id="PTHR11432:SF3">
    <property type="entry name" value="NADH-UBIQUINONE OXIDOREDUCTASE CHAIN 1"/>
    <property type="match status" value="1"/>
</dbReference>
<dbReference type="Pfam" id="PF00146">
    <property type="entry name" value="NADHdh"/>
    <property type="match status" value="1"/>
</dbReference>
<dbReference type="PROSITE" id="PS00667">
    <property type="entry name" value="COMPLEX1_ND1_1"/>
    <property type="match status" value="1"/>
</dbReference>
<dbReference type="PROSITE" id="PS00668">
    <property type="entry name" value="COMPLEX1_ND1_2"/>
    <property type="match status" value="1"/>
</dbReference>
<proteinExistence type="inferred from homology"/>
<protein>
    <recommendedName>
        <fullName>NADH-ubiquinone oxidoreductase chain 1</fullName>
        <ecNumber>7.1.1.2</ecNumber>
    </recommendedName>
    <alternativeName>
        <fullName>NADH dehydrogenase subunit 1</fullName>
    </alternativeName>
</protein>
<name>NU1M_LOXAF</name>
<keyword id="KW-0249">Electron transport</keyword>
<keyword id="KW-0472">Membrane</keyword>
<keyword id="KW-0496">Mitochondrion</keyword>
<keyword id="KW-0999">Mitochondrion inner membrane</keyword>
<keyword id="KW-0520">NAD</keyword>
<keyword id="KW-1185">Reference proteome</keyword>
<keyword id="KW-0679">Respiratory chain</keyword>
<keyword id="KW-1278">Translocase</keyword>
<keyword id="KW-0812">Transmembrane</keyword>
<keyword id="KW-1133">Transmembrane helix</keyword>
<keyword id="KW-0813">Transport</keyword>
<keyword id="KW-0830">Ubiquinone</keyword>
<evidence type="ECO:0000250" key="1"/>
<evidence type="ECO:0000255" key="2"/>
<evidence type="ECO:0000305" key="3"/>